<dbReference type="EMBL" id="DQ231562">
    <property type="protein sequence ID" value="ABB90069.1"/>
    <property type="molecule type" value="Genomic_DNA"/>
</dbReference>
<dbReference type="EMBL" id="DQ386163">
    <property type="protein sequence ID" value="ABD47086.1"/>
    <property type="molecule type" value="Genomic_DNA"/>
</dbReference>
<dbReference type="RefSeq" id="YP_635669.1">
    <property type="nucleotide sequence ID" value="NC_008096.2"/>
</dbReference>
<dbReference type="SMR" id="Q2VEF0"/>
<dbReference type="FunCoup" id="Q2VEF0">
    <property type="interactions" value="366"/>
</dbReference>
<dbReference type="STRING" id="4113.Q2VEF0"/>
<dbReference type="PaxDb" id="4113-PGSC0003DMT400049986"/>
<dbReference type="GeneID" id="4099874"/>
<dbReference type="KEGG" id="sot:4099874"/>
<dbReference type="eggNOG" id="KOG4663">
    <property type="taxonomic scope" value="Eukaryota"/>
</dbReference>
<dbReference type="InParanoid" id="Q2VEF0"/>
<dbReference type="OrthoDB" id="1246142at2759"/>
<dbReference type="Proteomes" id="UP000011115">
    <property type="component" value="Unassembled WGS sequence"/>
</dbReference>
<dbReference type="ExpressionAtlas" id="Q2VEF0">
    <property type="expression patterns" value="baseline"/>
</dbReference>
<dbReference type="GO" id="GO:0009535">
    <property type="term" value="C:chloroplast thylakoid membrane"/>
    <property type="evidence" value="ECO:0007669"/>
    <property type="project" value="UniProtKB-SubCell"/>
</dbReference>
<dbReference type="GO" id="GO:0016020">
    <property type="term" value="C:membrane"/>
    <property type="evidence" value="ECO:0000318"/>
    <property type="project" value="GO_Central"/>
</dbReference>
<dbReference type="GO" id="GO:0045158">
    <property type="term" value="F:electron transporter, transferring electrons within cytochrome b6/f complex of photosystem II activity"/>
    <property type="evidence" value="ECO:0007669"/>
    <property type="project" value="UniProtKB-UniRule"/>
</dbReference>
<dbReference type="GO" id="GO:0046872">
    <property type="term" value="F:metal ion binding"/>
    <property type="evidence" value="ECO:0007669"/>
    <property type="project" value="UniProtKB-KW"/>
</dbReference>
<dbReference type="GO" id="GO:0016491">
    <property type="term" value="F:oxidoreductase activity"/>
    <property type="evidence" value="ECO:0007669"/>
    <property type="project" value="InterPro"/>
</dbReference>
<dbReference type="GO" id="GO:0015979">
    <property type="term" value="P:photosynthesis"/>
    <property type="evidence" value="ECO:0007669"/>
    <property type="project" value="UniProtKB-UniRule"/>
</dbReference>
<dbReference type="GO" id="GO:0022904">
    <property type="term" value="P:respiratory electron transport chain"/>
    <property type="evidence" value="ECO:0007669"/>
    <property type="project" value="InterPro"/>
</dbReference>
<dbReference type="CDD" id="cd00284">
    <property type="entry name" value="Cytochrome_b_N"/>
    <property type="match status" value="1"/>
</dbReference>
<dbReference type="FunFam" id="1.20.810.10:FF:000001">
    <property type="entry name" value="Cytochrome b6"/>
    <property type="match status" value="1"/>
</dbReference>
<dbReference type="Gene3D" id="1.20.810.10">
    <property type="entry name" value="Cytochrome Bc1 Complex, Chain C"/>
    <property type="match status" value="1"/>
</dbReference>
<dbReference type="HAMAP" id="MF_00633">
    <property type="entry name" value="Cytb6_f_cytb6"/>
    <property type="match status" value="1"/>
</dbReference>
<dbReference type="InterPro" id="IPR005797">
    <property type="entry name" value="Cyt_b/b6_N"/>
</dbReference>
<dbReference type="InterPro" id="IPR023530">
    <property type="entry name" value="Cyt_B6_PetB"/>
</dbReference>
<dbReference type="InterPro" id="IPR027387">
    <property type="entry name" value="Cytb/b6-like_sf"/>
</dbReference>
<dbReference type="InterPro" id="IPR048259">
    <property type="entry name" value="Cytochrome_b_N_euk/bac"/>
</dbReference>
<dbReference type="InterPro" id="IPR016174">
    <property type="entry name" value="Di-haem_cyt_TM"/>
</dbReference>
<dbReference type="NCBIfam" id="NF002990">
    <property type="entry name" value="PRK03735.1"/>
    <property type="match status" value="1"/>
</dbReference>
<dbReference type="PANTHER" id="PTHR19271">
    <property type="entry name" value="CYTOCHROME B"/>
    <property type="match status" value="1"/>
</dbReference>
<dbReference type="PANTHER" id="PTHR19271:SF16">
    <property type="entry name" value="CYTOCHROME B"/>
    <property type="match status" value="1"/>
</dbReference>
<dbReference type="Pfam" id="PF00033">
    <property type="entry name" value="Cytochrome_B"/>
    <property type="match status" value="1"/>
</dbReference>
<dbReference type="PIRSF" id="PIRSF000032">
    <property type="entry name" value="Cytochrome_b6"/>
    <property type="match status" value="1"/>
</dbReference>
<dbReference type="SUPFAM" id="SSF81342">
    <property type="entry name" value="Transmembrane di-heme cytochromes"/>
    <property type="match status" value="1"/>
</dbReference>
<dbReference type="PROSITE" id="PS51002">
    <property type="entry name" value="CYTB_NTER"/>
    <property type="match status" value="1"/>
</dbReference>
<feature type="chain" id="PRO_0000275336" description="Cytochrome b6">
    <location>
        <begin position="1"/>
        <end position="215"/>
    </location>
</feature>
<feature type="transmembrane region" description="Helical" evidence="1">
    <location>
        <begin position="32"/>
        <end position="52"/>
    </location>
</feature>
<feature type="transmembrane region" description="Helical" evidence="1">
    <location>
        <begin position="90"/>
        <end position="110"/>
    </location>
</feature>
<feature type="transmembrane region" description="Helical" evidence="1">
    <location>
        <begin position="116"/>
        <end position="136"/>
    </location>
</feature>
<feature type="transmembrane region" description="Helical" evidence="1">
    <location>
        <begin position="186"/>
        <end position="206"/>
    </location>
</feature>
<feature type="binding site" description="covalent" evidence="1">
    <location>
        <position position="35"/>
    </location>
    <ligand>
        <name>heme c</name>
        <dbReference type="ChEBI" id="CHEBI:61717"/>
    </ligand>
</feature>
<feature type="binding site" description="axial binding residue" evidence="1">
    <location>
        <position position="86"/>
    </location>
    <ligand>
        <name>heme b</name>
        <dbReference type="ChEBI" id="CHEBI:60344"/>
        <label>2</label>
    </ligand>
    <ligandPart>
        <name>Fe</name>
        <dbReference type="ChEBI" id="CHEBI:18248"/>
    </ligandPart>
</feature>
<feature type="binding site" description="axial binding residue" evidence="1">
    <location>
        <position position="100"/>
    </location>
    <ligand>
        <name>heme b</name>
        <dbReference type="ChEBI" id="CHEBI:60344"/>
        <label>1</label>
    </ligand>
    <ligandPart>
        <name>Fe</name>
        <dbReference type="ChEBI" id="CHEBI:18248"/>
    </ligandPart>
</feature>
<feature type="binding site" description="axial binding residue" evidence="1">
    <location>
        <position position="187"/>
    </location>
    <ligand>
        <name>heme b</name>
        <dbReference type="ChEBI" id="CHEBI:60344"/>
        <label>2</label>
    </ligand>
    <ligandPart>
        <name>Fe</name>
        <dbReference type="ChEBI" id="CHEBI:18248"/>
    </ligandPart>
</feature>
<feature type="binding site" description="axial binding residue" evidence="1">
    <location>
        <position position="202"/>
    </location>
    <ligand>
        <name>heme b</name>
        <dbReference type="ChEBI" id="CHEBI:60344"/>
        <label>1</label>
    </ligand>
    <ligandPart>
        <name>Fe</name>
        <dbReference type="ChEBI" id="CHEBI:18248"/>
    </ligandPart>
</feature>
<protein>
    <recommendedName>
        <fullName evidence="1">Cytochrome b6</fullName>
    </recommendedName>
</protein>
<gene>
    <name evidence="1" type="primary">petB</name>
</gene>
<comment type="function">
    <text evidence="1">Component of the cytochrome b6-f complex, which mediates electron transfer between photosystem II (PSII) and photosystem I (PSI), cyclic electron flow around PSI, and state transitions.</text>
</comment>
<comment type="cofactor">
    <cofactor evidence="1">
        <name>heme b</name>
        <dbReference type="ChEBI" id="CHEBI:60344"/>
    </cofactor>
    <text evidence="1">Binds 2 heme b groups non-covalently with two histidine residues as axial ligands.</text>
</comment>
<comment type="cofactor">
    <cofactor evidence="1">
        <name>heme c</name>
        <dbReference type="ChEBI" id="CHEBI:61717"/>
    </cofactor>
    <text evidence="1">Binds one heme group covalently by a single cysteine link with no axial amino acid ligand. This heme was named heme ci.</text>
</comment>
<comment type="subunit">
    <text evidence="1">The 4 large subunits of the cytochrome b6-f complex are cytochrome b6, subunit IV (17 kDa polypeptide, PetD), cytochrome f and the Rieske protein, while the 4 small subunits are PetG, PetL, PetM and PetN. The complex functions as a dimer.</text>
</comment>
<comment type="subcellular location">
    <subcellularLocation>
        <location evidence="1">Plastid</location>
        <location evidence="1">Chloroplast thylakoid membrane</location>
        <topology evidence="1">Multi-pass membrane protein</topology>
    </subcellularLocation>
</comment>
<comment type="miscellaneous">
    <text evidence="1">Heme 1 (or BH or b566) is high-potential and absorbs at about 566 nm, and heme 2 (or BL or b562) is low-potential and absorbs at about 562 nm.</text>
</comment>
<comment type="similarity">
    <text evidence="1">Belongs to the cytochrome b family. PetB subfamily.</text>
</comment>
<keyword id="KW-0150">Chloroplast</keyword>
<keyword id="KW-0249">Electron transport</keyword>
<keyword id="KW-0349">Heme</keyword>
<keyword id="KW-0408">Iron</keyword>
<keyword id="KW-0472">Membrane</keyword>
<keyword id="KW-0479">Metal-binding</keyword>
<keyword id="KW-0602">Photosynthesis</keyword>
<keyword id="KW-0934">Plastid</keyword>
<keyword id="KW-1185">Reference proteome</keyword>
<keyword id="KW-0793">Thylakoid</keyword>
<keyword id="KW-0812">Transmembrane</keyword>
<keyword id="KW-1133">Transmembrane helix</keyword>
<keyword id="KW-0813">Transport</keyword>
<accession>Q2VEF0</accession>
<name>CYB6_SOLTU</name>
<evidence type="ECO:0000255" key="1">
    <source>
        <dbReference type="HAMAP-Rule" id="MF_00633"/>
    </source>
</evidence>
<geneLocation type="chloroplast"/>
<reference key="1">
    <citation type="journal article" date="2006" name="Plant Cell Rep.">
        <title>The complete chloroplast genome sequences of Solanum tuberosum and comparative analysis with Solanaceae species identified the presence of a 241-bp deletion in cultivated potato chloroplast DNA sequence.</title>
        <authorList>
            <person name="Chung H.-J."/>
            <person name="Jung J.D."/>
            <person name="Park H.-W."/>
            <person name="Kim J.-H."/>
            <person name="Cha H.W."/>
            <person name="Min S.R."/>
            <person name="Jeong W.-J."/>
            <person name="Liu J.R."/>
        </authorList>
    </citation>
    <scope>NUCLEOTIDE SEQUENCE [LARGE SCALE GENOMIC DNA]</scope>
    <source>
        <strain>cv. Desiree</strain>
    </source>
</reference>
<reference key="2">
    <citation type="submission" date="2006-02" db="EMBL/GenBank/DDBJ databases">
        <title>Complete chloroplast genome sequences of Solanum tuberosum cultivar Desiree and comparative analyses with other Solanaceae genomes.</title>
        <authorList>
            <person name="Gargano D."/>
            <person name="Scotti N."/>
            <person name="Vezzi A."/>
            <person name="Bilardi A."/>
            <person name="Valle G."/>
            <person name="Grillo S."/>
            <person name="Cardi T."/>
        </authorList>
    </citation>
    <scope>NUCLEOTIDE SEQUENCE [LARGE SCALE GENOMIC DNA]</scope>
    <source>
        <strain>cv. Desiree</strain>
    </source>
</reference>
<proteinExistence type="inferred from homology"/>
<sequence>MSKVYDWFEERLEIQAIADDITSKYVPPHVNIFYCLGGITLTCFLVQVATGFAMTFYYRPTVTEAFASVQYIMTEANFGWLIRSVHRWSASMMVLMMILHVFRVYLTGGFKKPRELTWVTGVVLAVLTASFGVTGYSLPWDQIGYWAVKIVTGVPDAIPVIGSPLVELLRGSASVGQSTLTRFYSLHTFVLPLLTAVFMLMHFPMIRKQGISGPL</sequence>
<organism>
    <name type="scientific">Solanum tuberosum</name>
    <name type="common">Potato</name>
    <dbReference type="NCBI Taxonomy" id="4113"/>
    <lineage>
        <taxon>Eukaryota</taxon>
        <taxon>Viridiplantae</taxon>
        <taxon>Streptophyta</taxon>
        <taxon>Embryophyta</taxon>
        <taxon>Tracheophyta</taxon>
        <taxon>Spermatophyta</taxon>
        <taxon>Magnoliopsida</taxon>
        <taxon>eudicotyledons</taxon>
        <taxon>Gunneridae</taxon>
        <taxon>Pentapetalae</taxon>
        <taxon>asterids</taxon>
        <taxon>lamiids</taxon>
        <taxon>Solanales</taxon>
        <taxon>Solanaceae</taxon>
        <taxon>Solanoideae</taxon>
        <taxon>Solaneae</taxon>
        <taxon>Solanum</taxon>
    </lineage>
</organism>